<protein>
    <recommendedName>
        <fullName evidence="1">Aspartate-semialdehyde dehydrogenase</fullName>
        <shortName evidence="1">ASA dehydrogenase</shortName>
        <shortName evidence="1">ASADH</shortName>
        <ecNumber evidence="1">1.2.1.11</ecNumber>
    </recommendedName>
    <alternativeName>
        <fullName evidence="1">Aspartate-beta-semialdehyde dehydrogenase</fullName>
    </alternativeName>
</protein>
<name>DHAS_RICCN</name>
<evidence type="ECO:0000255" key="1">
    <source>
        <dbReference type="HAMAP-Rule" id="MF_02121"/>
    </source>
</evidence>
<comment type="function">
    <text evidence="1">Catalyzes the NADPH-dependent formation of L-aspartate-semialdehyde (L-ASA) by the reductive dephosphorylation of L-aspartyl-4-phosphate.</text>
</comment>
<comment type="catalytic activity">
    <reaction evidence="1">
        <text>L-aspartate 4-semialdehyde + phosphate + NADP(+) = 4-phospho-L-aspartate + NADPH + H(+)</text>
        <dbReference type="Rhea" id="RHEA:24284"/>
        <dbReference type="ChEBI" id="CHEBI:15378"/>
        <dbReference type="ChEBI" id="CHEBI:43474"/>
        <dbReference type="ChEBI" id="CHEBI:57535"/>
        <dbReference type="ChEBI" id="CHEBI:57783"/>
        <dbReference type="ChEBI" id="CHEBI:58349"/>
        <dbReference type="ChEBI" id="CHEBI:537519"/>
        <dbReference type="EC" id="1.2.1.11"/>
    </reaction>
</comment>
<comment type="pathway">
    <text evidence="1">Amino-acid biosynthesis; L-lysine biosynthesis via DAP pathway; (S)-tetrahydrodipicolinate from L-aspartate: step 2/4.</text>
</comment>
<comment type="pathway">
    <text evidence="1">Amino-acid biosynthesis; L-methionine biosynthesis via de novo pathway; L-homoserine from L-aspartate: step 2/3.</text>
</comment>
<comment type="pathway">
    <text evidence="1">Amino-acid biosynthesis; L-threonine biosynthesis; L-threonine from L-aspartate: step 2/5.</text>
</comment>
<comment type="subunit">
    <text evidence="1">Homodimer.</text>
</comment>
<comment type="similarity">
    <text evidence="1">Belongs to the aspartate-semialdehyde dehydrogenase family.</text>
</comment>
<feature type="chain" id="PRO_0000280938" description="Aspartate-semialdehyde dehydrogenase">
    <location>
        <begin position="1"/>
        <end position="338"/>
    </location>
</feature>
<feature type="active site" description="Acyl-thioester intermediate" evidence="1">
    <location>
        <position position="132"/>
    </location>
</feature>
<feature type="active site" description="Proton acceptor" evidence="1">
    <location>
        <position position="244"/>
    </location>
</feature>
<feature type="binding site" evidence="1">
    <location>
        <begin position="13"/>
        <end position="16"/>
    </location>
    <ligand>
        <name>NADP(+)</name>
        <dbReference type="ChEBI" id="CHEBI:58349"/>
    </ligand>
</feature>
<feature type="binding site" evidence="1">
    <location>
        <begin position="41"/>
        <end position="42"/>
    </location>
    <ligand>
        <name>NADP(+)</name>
        <dbReference type="ChEBI" id="CHEBI:58349"/>
    </ligand>
</feature>
<feature type="binding site" evidence="1">
    <location>
        <position position="101"/>
    </location>
    <ligand>
        <name>phosphate</name>
        <dbReference type="ChEBI" id="CHEBI:43474"/>
    </ligand>
</feature>
<feature type="binding site" evidence="1">
    <location>
        <position position="159"/>
    </location>
    <ligand>
        <name>substrate</name>
    </ligand>
</feature>
<feature type="binding site" evidence="1">
    <location>
        <begin position="162"/>
        <end position="163"/>
    </location>
    <ligand>
        <name>NADP(+)</name>
        <dbReference type="ChEBI" id="CHEBI:58349"/>
    </ligand>
</feature>
<feature type="binding site" evidence="1">
    <location>
        <position position="187"/>
    </location>
    <ligand>
        <name>NADP(+)</name>
        <dbReference type="ChEBI" id="CHEBI:58349"/>
    </ligand>
</feature>
<feature type="binding site" evidence="1">
    <location>
        <position position="216"/>
    </location>
    <ligand>
        <name>phosphate</name>
        <dbReference type="ChEBI" id="CHEBI:43474"/>
    </ligand>
</feature>
<feature type="binding site" evidence="1">
    <location>
        <position position="237"/>
    </location>
    <ligand>
        <name>substrate</name>
    </ligand>
</feature>
<feature type="binding site" evidence="1">
    <location>
        <position position="317"/>
    </location>
    <ligand>
        <name>NADP(+)</name>
        <dbReference type="ChEBI" id="CHEBI:58349"/>
    </ligand>
</feature>
<reference key="1">
    <citation type="journal article" date="2001" name="Science">
        <title>Mechanisms of evolution in Rickettsia conorii and R. prowazekii.</title>
        <authorList>
            <person name="Ogata H."/>
            <person name="Audic S."/>
            <person name="Renesto-Audiffren P."/>
            <person name="Fournier P.-E."/>
            <person name="Barbe V."/>
            <person name="Samson D."/>
            <person name="Roux V."/>
            <person name="Cossart P."/>
            <person name="Weissenbach J."/>
            <person name="Claverie J.-M."/>
            <person name="Raoult D."/>
        </authorList>
    </citation>
    <scope>NUCLEOTIDE SEQUENCE [LARGE SCALE GENOMIC DNA]</scope>
    <source>
        <strain>ATCC VR-613 / Malish 7</strain>
    </source>
</reference>
<sequence>MTKKYNIAVIGATGNVGRETLNILAERNFPINKVYAIASDSSLGREVSFGEKILQINSLKSLHFDDIDIAFFCAGSEVSKEFIPKATASNCVVIDKSSLFRVDNQVPLIVPEVNLSTLKEFNTKNIIANPNCIVIPLAVALKPLDNEIKIKRVVISTYQSVSGAGKAGMDELYDQTKSKYVFGENDPKKFPKQIAFNIFPHIGDLNKDGYTSEEAKIASELNKIIGNHFKASVTSVRVPVFIGHSISVNIEFNDKIDAKEVEEILQDADGIVTISNNNYLAYISPVEVVGEDAVYVSRIRNDVSRDNTINLWITCDNLRKGAALNSVQIAEELINNYL</sequence>
<gene>
    <name evidence="1" type="primary">asd</name>
    <name type="ordered locus">RC0430</name>
</gene>
<keyword id="KW-0028">Amino-acid biosynthesis</keyword>
<keyword id="KW-0220">Diaminopimelate biosynthesis</keyword>
<keyword id="KW-0457">Lysine biosynthesis</keyword>
<keyword id="KW-0486">Methionine biosynthesis</keyword>
<keyword id="KW-0521">NADP</keyword>
<keyword id="KW-0560">Oxidoreductase</keyword>
<keyword id="KW-0791">Threonine biosynthesis</keyword>
<organism>
    <name type="scientific">Rickettsia conorii (strain ATCC VR-613 / Malish 7)</name>
    <dbReference type="NCBI Taxonomy" id="272944"/>
    <lineage>
        <taxon>Bacteria</taxon>
        <taxon>Pseudomonadati</taxon>
        <taxon>Pseudomonadota</taxon>
        <taxon>Alphaproteobacteria</taxon>
        <taxon>Rickettsiales</taxon>
        <taxon>Rickettsiaceae</taxon>
        <taxon>Rickettsieae</taxon>
        <taxon>Rickettsia</taxon>
        <taxon>spotted fever group</taxon>
    </lineage>
</organism>
<accession>Q92IJ0</accession>
<proteinExistence type="inferred from homology"/>
<dbReference type="EC" id="1.2.1.11" evidence="1"/>
<dbReference type="EMBL" id="AE006914">
    <property type="protein sequence ID" value="AAL02968.1"/>
    <property type="molecule type" value="Genomic_DNA"/>
</dbReference>
<dbReference type="PIR" id="F97753">
    <property type="entry name" value="F97753"/>
</dbReference>
<dbReference type="RefSeq" id="WP_010977078.1">
    <property type="nucleotide sequence ID" value="NC_003103.1"/>
</dbReference>
<dbReference type="SMR" id="Q92IJ0"/>
<dbReference type="GeneID" id="927572"/>
<dbReference type="KEGG" id="rco:RC0430"/>
<dbReference type="PATRIC" id="fig|272944.4.peg.487"/>
<dbReference type="HOGENOM" id="CLU_049966_0_1_5"/>
<dbReference type="UniPathway" id="UPA00034">
    <property type="reaction ID" value="UER00016"/>
</dbReference>
<dbReference type="UniPathway" id="UPA00050">
    <property type="reaction ID" value="UER00463"/>
</dbReference>
<dbReference type="UniPathway" id="UPA00051">
    <property type="reaction ID" value="UER00464"/>
</dbReference>
<dbReference type="Proteomes" id="UP000000816">
    <property type="component" value="Chromosome"/>
</dbReference>
<dbReference type="GO" id="GO:0004073">
    <property type="term" value="F:aspartate-semialdehyde dehydrogenase activity"/>
    <property type="evidence" value="ECO:0007669"/>
    <property type="project" value="UniProtKB-UniRule"/>
</dbReference>
<dbReference type="GO" id="GO:0051287">
    <property type="term" value="F:NAD binding"/>
    <property type="evidence" value="ECO:0007669"/>
    <property type="project" value="InterPro"/>
</dbReference>
<dbReference type="GO" id="GO:0050661">
    <property type="term" value="F:NADP binding"/>
    <property type="evidence" value="ECO:0007669"/>
    <property type="project" value="UniProtKB-UniRule"/>
</dbReference>
<dbReference type="GO" id="GO:0046983">
    <property type="term" value="F:protein dimerization activity"/>
    <property type="evidence" value="ECO:0007669"/>
    <property type="project" value="InterPro"/>
</dbReference>
<dbReference type="GO" id="GO:0071266">
    <property type="term" value="P:'de novo' L-methionine biosynthetic process"/>
    <property type="evidence" value="ECO:0007669"/>
    <property type="project" value="UniProtKB-UniRule"/>
</dbReference>
<dbReference type="GO" id="GO:0019877">
    <property type="term" value="P:diaminopimelate biosynthetic process"/>
    <property type="evidence" value="ECO:0007669"/>
    <property type="project" value="UniProtKB-UniRule"/>
</dbReference>
<dbReference type="GO" id="GO:0009097">
    <property type="term" value="P:isoleucine biosynthetic process"/>
    <property type="evidence" value="ECO:0007669"/>
    <property type="project" value="InterPro"/>
</dbReference>
<dbReference type="GO" id="GO:0009089">
    <property type="term" value="P:lysine biosynthetic process via diaminopimelate"/>
    <property type="evidence" value="ECO:0007669"/>
    <property type="project" value="UniProtKB-UniRule"/>
</dbReference>
<dbReference type="GO" id="GO:0009088">
    <property type="term" value="P:threonine biosynthetic process"/>
    <property type="evidence" value="ECO:0007669"/>
    <property type="project" value="UniProtKB-UniRule"/>
</dbReference>
<dbReference type="CDD" id="cd18131">
    <property type="entry name" value="ASADH_C_bac_euk_like"/>
    <property type="match status" value="1"/>
</dbReference>
<dbReference type="CDD" id="cd02316">
    <property type="entry name" value="VcASADH2_like_N"/>
    <property type="match status" value="1"/>
</dbReference>
<dbReference type="Gene3D" id="3.30.360.10">
    <property type="entry name" value="Dihydrodipicolinate Reductase, domain 2"/>
    <property type="match status" value="1"/>
</dbReference>
<dbReference type="Gene3D" id="3.40.50.720">
    <property type="entry name" value="NAD(P)-binding Rossmann-like Domain"/>
    <property type="match status" value="1"/>
</dbReference>
<dbReference type="HAMAP" id="MF_02121">
    <property type="entry name" value="ASADH"/>
    <property type="match status" value="1"/>
</dbReference>
<dbReference type="InterPro" id="IPR012080">
    <property type="entry name" value="Asp_semialdehyde_DH"/>
</dbReference>
<dbReference type="InterPro" id="IPR005986">
    <property type="entry name" value="Asp_semialdehyde_DH_beta"/>
</dbReference>
<dbReference type="InterPro" id="IPR036291">
    <property type="entry name" value="NAD(P)-bd_dom_sf"/>
</dbReference>
<dbReference type="InterPro" id="IPR000534">
    <property type="entry name" value="Semialdehyde_DH_NAD-bd"/>
</dbReference>
<dbReference type="InterPro" id="IPR012280">
    <property type="entry name" value="Semialdhyde_DH_dimer_dom"/>
</dbReference>
<dbReference type="NCBIfam" id="TIGR01296">
    <property type="entry name" value="asd_B"/>
    <property type="match status" value="1"/>
</dbReference>
<dbReference type="NCBIfam" id="NF004224">
    <property type="entry name" value="PRK05671.1"/>
    <property type="match status" value="1"/>
</dbReference>
<dbReference type="NCBIfam" id="NF011456">
    <property type="entry name" value="PRK14874.1"/>
    <property type="match status" value="1"/>
</dbReference>
<dbReference type="PANTHER" id="PTHR46278:SF2">
    <property type="entry name" value="ASPARTATE-SEMIALDEHYDE DEHYDROGENASE"/>
    <property type="match status" value="1"/>
</dbReference>
<dbReference type="PANTHER" id="PTHR46278">
    <property type="entry name" value="DEHYDROGENASE, PUTATIVE-RELATED"/>
    <property type="match status" value="1"/>
</dbReference>
<dbReference type="Pfam" id="PF01118">
    <property type="entry name" value="Semialdhyde_dh"/>
    <property type="match status" value="1"/>
</dbReference>
<dbReference type="Pfam" id="PF02774">
    <property type="entry name" value="Semialdhyde_dhC"/>
    <property type="match status" value="1"/>
</dbReference>
<dbReference type="PIRSF" id="PIRSF000148">
    <property type="entry name" value="ASA_dh"/>
    <property type="match status" value="1"/>
</dbReference>
<dbReference type="SMART" id="SM00859">
    <property type="entry name" value="Semialdhyde_dh"/>
    <property type="match status" value="1"/>
</dbReference>
<dbReference type="SUPFAM" id="SSF55347">
    <property type="entry name" value="Glyceraldehyde-3-phosphate dehydrogenase-like, C-terminal domain"/>
    <property type="match status" value="1"/>
</dbReference>
<dbReference type="SUPFAM" id="SSF51735">
    <property type="entry name" value="NAD(P)-binding Rossmann-fold domains"/>
    <property type="match status" value="1"/>
</dbReference>